<evidence type="ECO:0000255" key="1">
    <source>
        <dbReference type="HAMAP-Rule" id="MF_00528"/>
    </source>
</evidence>
<comment type="function">
    <text evidence="1">Nucleoside triphosphate pyrophosphatase. May have a dual role in cell division arrest and in preventing the incorporation of modified nucleotides into cellular nucleic acids.</text>
</comment>
<comment type="catalytic activity">
    <reaction evidence="1">
        <text>a ribonucleoside 5'-triphosphate + H2O = a ribonucleoside 5'-phosphate + diphosphate + H(+)</text>
        <dbReference type="Rhea" id="RHEA:23996"/>
        <dbReference type="ChEBI" id="CHEBI:15377"/>
        <dbReference type="ChEBI" id="CHEBI:15378"/>
        <dbReference type="ChEBI" id="CHEBI:33019"/>
        <dbReference type="ChEBI" id="CHEBI:58043"/>
        <dbReference type="ChEBI" id="CHEBI:61557"/>
        <dbReference type="EC" id="3.6.1.9"/>
    </reaction>
</comment>
<comment type="catalytic activity">
    <reaction evidence="1">
        <text>a 2'-deoxyribonucleoside 5'-triphosphate + H2O = a 2'-deoxyribonucleoside 5'-phosphate + diphosphate + H(+)</text>
        <dbReference type="Rhea" id="RHEA:44644"/>
        <dbReference type="ChEBI" id="CHEBI:15377"/>
        <dbReference type="ChEBI" id="CHEBI:15378"/>
        <dbReference type="ChEBI" id="CHEBI:33019"/>
        <dbReference type="ChEBI" id="CHEBI:61560"/>
        <dbReference type="ChEBI" id="CHEBI:65317"/>
        <dbReference type="EC" id="3.6.1.9"/>
    </reaction>
</comment>
<comment type="cofactor">
    <cofactor evidence="1">
        <name>a divalent metal cation</name>
        <dbReference type="ChEBI" id="CHEBI:60240"/>
    </cofactor>
</comment>
<comment type="subcellular location">
    <subcellularLocation>
        <location evidence="1">Cytoplasm</location>
    </subcellularLocation>
</comment>
<comment type="similarity">
    <text evidence="1">Belongs to the Maf family.</text>
</comment>
<accession>Q3SWH0</accession>
<proteinExistence type="inferred from homology"/>
<sequence length="202" mass="21719">MAIWRGSEPLILASQSRVRQLLLANAGLPFETMPAAIDERAVQRSSGLTTAGEIAVRLACEKAREVSSRSPGRYVIGADQTLECDGRLLNKPAGRADAGAHLRALSGRTHALHAGVAVVRDGRLMFENVSVARMTMRELSEDTIESYLDAAGDAASASVGAYQLEGLGIHLFSRIEGDHFTILGLPLLPLLAYLRSQWLLSL</sequence>
<protein>
    <recommendedName>
        <fullName evidence="1">Nucleoside triphosphate pyrophosphatase</fullName>
        <ecNumber evidence="1">3.6.1.9</ecNumber>
    </recommendedName>
    <alternativeName>
        <fullName evidence="1">Nucleotide pyrophosphatase</fullName>
        <shortName evidence="1">Nucleotide PPase</shortName>
    </alternativeName>
</protein>
<name>NTPP_NITWN</name>
<keyword id="KW-0963">Cytoplasm</keyword>
<keyword id="KW-0378">Hydrolase</keyword>
<keyword id="KW-0546">Nucleotide metabolism</keyword>
<keyword id="KW-1185">Reference proteome</keyword>
<reference key="1">
    <citation type="journal article" date="2006" name="Appl. Environ. Microbiol.">
        <title>Genome sequence of the chemolithoautotrophic nitrite-oxidizing bacterium Nitrobacter winogradskyi Nb-255.</title>
        <authorList>
            <person name="Starkenburg S.R."/>
            <person name="Chain P.S.G."/>
            <person name="Sayavedra-Soto L.A."/>
            <person name="Hauser L."/>
            <person name="Land M.L."/>
            <person name="Larimer F.W."/>
            <person name="Malfatti S.A."/>
            <person name="Klotz M.G."/>
            <person name="Bottomley P.J."/>
            <person name="Arp D.J."/>
            <person name="Hickey W.J."/>
        </authorList>
    </citation>
    <scope>NUCLEOTIDE SEQUENCE [LARGE SCALE GENOMIC DNA]</scope>
    <source>
        <strain>ATCC 25391 / DSM 10237 / CIP 104748 / NCIMB 11846 / Nb-255</strain>
    </source>
</reference>
<feature type="chain" id="PRO_0000267353" description="Nucleoside triphosphate pyrophosphatase">
    <location>
        <begin position="1"/>
        <end position="202"/>
    </location>
</feature>
<feature type="active site" description="Proton acceptor" evidence="1">
    <location>
        <position position="79"/>
    </location>
</feature>
<gene>
    <name type="ordered locus">Nwi_0103</name>
</gene>
<dbReference type="EC" id="3.6.1.9" evidence="1"/>
<dbReference type="EMBL" id="CP000115">
    <property type="protein sequence ID" value="ABA03371.1"/>
    <property type="molecule type" value="Genomic_DNA"/>
</dbReference>
<dbReference type="RefSeq" id="WP_011313440.1">
    <property type="nucleotide sequence ID" value="NC_007406.1"/>
</dbReference>
<dbReference type="SMR" id="Q3SWH0"/>
<dbReference type="STRING" id="323098.Nwi_0103"/>
<dbReference type="KEGG" id="nwi:Nwi_0103"/>
<dbReference type="eggNOG" id="COG0424">
    <property type="taxonomic scope" value="Bacteria"/>
</dbReference>
<dbReference type="HOGENOM" id="CLU_040416_1_1_5"/>
<dbReference type="OrthoDB" id="9813962at2"/>
<dbReference type="Proteomes" id="UP000002531">
    <property type="component" value="Chromosome"/>
</dbReference>
<dbReference type="GO" id="GO:0005737">
    <property type="term" value="C:cytoplasm"/>
    <property type="evidence" value="ECO:0007669"/>
    <property type="project" value="UniProtKB-SubCell"/>
</dbReference>
<dbReference type="GO" id="GO:0047429">
    <property type="term" value="F:nucleoside triphosphate diphosphatase activity"/>
    <property type="evidence" value="ECO:0007669"/>
    <property type="project" value="UniProtKB-EC"/>
</dbReference>
<dbReference type="GO" id="GO:0009117">
    <property type="term" value="P:nucleotide metabolic process"/>
    <property type="evidence" value="ECO:0007669"/>
    <property type="project" value="UniProtKB-KW"/>
</dbReference>
<dbReference type="CDD" id="cd00555">
    <property type="entry name" value="Maf"/>
    <property type="match status" value="1"/>
</dbReference>
<dbReference type="Gene3D" id="3.90.950.10">
    <property type="match status" value="1"/>
</dbReference>
<dbReference type="HAMAP" id="MF_00528">
    <property type="entry name" value="Maf"/>
    <property type="match status" value="1"/>
</dbReference>
<dbReference type="InterPro" id="IPR029001">
    <property type="entry name" value="ITPase-like_fam"/>
</dbReference>
<dbReference type="InterPro" id="IPR003697">
    <property type="entry name" value="Maf-like"/>
</dbReference>
<dbReference type="PANTHER" id="PTHR43213">
    <property type="entry name" value="BIFUNCTIONAL DTTP/UTP PYROPHOSPHATASE/METHYLTRANSFERASE PROTEIN-RELATED"/>
    <property type="match status" value="1"/>
</dbReference>
<dbReference type="PANTHER" id="PTHR43213:SF5">
    <property type="entry name" value="BIFUNCTIONAL DTTP_UTP PYROPHOSPHATASE_METHYLTRANSFERASE PROTEIN-RELATED"/>
    <property type="match status" value="1"/>
</dbReference>
<dbReference type="Pfam" id="PF02545">
    <property type="entry name" value="Maf"/>
    <property type="match status" value="1"/>
</dbReference>
<dbReference type="PIRSF" id="PIRSF006305">
    <property type="entry name" value="Maf"/>
    <property type="match status" value="1"/>
</dbReference>
<dbReference type="SUPFAM" id="SSF52972">
    <property type="entry name" value="ITPase-like"/>
    <property type="match status" value="1"/>
</dbReference>
<organism>
    <name type="scientific">Nitrobacter winogradskyi (strain ATCC 25391 / DSM 10237 / CIP 104748 / NCIMB 11846 / Nb-255)</name>
    <dbReference type="NCBI Taxonomy" id="323098"/>
    <lineage>
        <taxon>Bacteria</taxon>
        <taxon>Pseudomonadati</taxon>
        <taxon>Pseudomonadota</taxon>
        <taxon>Alphaproteobacteria</taxon>
        <taxon>Hyphomicrobiales</taxon>
        <taxon>Nitrobacteraceae</taxon>
        <taxon>Nitrobacter</taxon>
    </lineage>
</organism>